<dbReference type="EC" id="7.1.1.-" evidence="1"/>
<dbReference type="EMBL" id="CP000359">
    <property type="protein sequence ID" value="ABF45214.1"/>
    <property type="molecule type" value="Genomic_DNA"/>
</dbReference>
<dbReference type="RefSeq" id="WP_011530052.1">
    <property type="nucleotide sequence ID" value="NC_008025.1"/>
</dbReference>
<dbReference type="SMR" id="Q1IZX0"/>
<dbReference type="STRING" id="319795.Dgeo_0912"/>
<dbReference type="KEGG" id="dge:Dgeo_0912"/>
<dbReference type="eggNOG" id="COG0649">
    <property type="taxonomic scope" value="Bacteria"/>
</dbReference>
<dbReference type="HOGENOM" id="CLU_015134_1_2_0"/>
<dbReference type="Proteomes" id="UP000002431">
    <property type="component" value="Chromosome"/>
</dbReference>
<dbReference type="GO" id="GO:0005886">
    <property type="term" value="C:plasma membrane"/>
    <property type="evidence" value="ECO:0007669"/>
    <property type="project" value="UniProtKB-SubCell"/>
</dbReference>
<dbReference type="GO" id="GO:0051287">
    <property type="term" value="F:NAD binding"/>
    <property type="evidence" value="ECO:0007669"/>
    <property type="project" value="InterPro"/>
</dbReference>
<dbReference type="GO" id="GO:0050136">
    <property type="term" value="F:NADH:ubiquinone reductase (non-electrogenic) activity"/>
    <property type="evidence" value="ECO:0007669"/>
    <property type="project" value="UniProtKB-UniRule"/>
</dbReference>
<dbReference type="GO" id="GO:0048038">
    <property type="term" value="F:quinone binding"/>
    <property type="evidence" value="ECO:0007669"/>
    <property type="project" value="UniProtKB-KW"/>
</dbReference>
<dbReference type="Gene3D" id="1.10.645.10">
    <property type="entry name" value="Cytochrome-c3 Hydrogenase, chain B"/>
    <property type="match status" value="1"/>
</dbReference>
<dbReference type="HAMAP" id="MF_01358">
    <property type="entry name" value="NDH1_NuoD"/>
    <property type="match status" value="1"/>
</dbReference>
<dbReference type="InterPro" id="IPR001135">
    <property type="entry name" value="NADH_Q_OxRdtase_suD"/>
</dbReference>
<dbReference type="InterPro" id="IPR014029">
    <property type="entry name" value="NADH_UbQ_OxRdtase_49kDa_CS"/>
</dbReference>
<dbReference type="InterPro" id="IPR022885">
    <property type="entry name" value="NDH1_su_D/H"/>
</dbReference>
<dbReference type="InterPro" id="IPR029014">
    <property type="entry name" value="NiFe-Hase_large"/>
</dbReference>
<dbReference type="NCBIfam" id="TIGR01962">
    <property type="entry name" value="NuoD"/>
    <property type="match status" value="1"/>
</dbReference>
<dbReference type="NCBIfam" id="NF004739">
    <property type="entry name" value="PRK06075.1"/>
    <property type="match status" value="1"/>
</dbReference>
<dbReference type="PANTHER" id="PTHR11993:SF10">
    <property type="entry name" value="NADH DEHYDROGENASE [UBIQUINONE] IRON-SULFUR PROTEIN 2, MITOCHONDRIAL"/>
    <property type="match status" value="1"/>
</dbReference>
<dbReference type="PANTHER" id="PTHR11993">
    <property type="entry name" value="NADH-UBIQUINONE OXIDOREDUCTASE 49 KDA SUBUNIT"/>
    <property type="match status" value="1"/>
</dbReference>
<dbReference type="Pfam" id="PF00346">
    <property type="entry name" value="Complex1_49kDa"/>
    <property type="match status" value="1"/>
</dbReference>
<dbReference type="SUPFAM" id="SSF56762">
    <property type="entry name" value="HydB/Nqo4-like"/>
    <property type="match status" value="1"/>
</dbReference>
<dbReference type="PROSITE" id="PS00535">
    <property type="entry name" value="COMPLEX1_49K"/>
    <property type="match status" value="1"/>
</dbReference>
<reference key="1">
    <citation type="submission" date="2006-04" db="EMBL/GenBank/DDBJ databases">
        <title>Complete sequence of chromosome of Deinococcus geothermalis DSM 11300.</title>
        <authorList>
            <person name="Copeland A."/>
            <person name="Lucas S."/>
            <person name="Lapidus A."/>
            <person name="Barry K."/>
            <person name="Detter J.C."/>
            <person name="Glavina del Rio T."/>
            <person name="Hammon N."/>
            <person name="Israni S."/>
            <person name="Dalin E."/>
            <person name="Tice H."/>
            <person name="Pitluck S."/>
            <person name="Brettin T."/>
            <person name="Bruce D."/>
            <person name="Han C."/>
            <person name="Tapia R."/>
            <person name="Saunders E."/>
            <person name="Gilna P."/>
            <person name="Schmutz J."/>
            <person name="Larimer F."/>
            <person name="Land M."/>
            <person name="Hauser L."/>
            <person name="Kyrpides N."/>
            <person name="Kim E."/>
            <person name="Daly M.J."/>
            <person name="Fredrickson J.K."/>
            <person name="Makarova K.S."/>
            <person name="Gaidamakova E.K."/>
            <person name="Zhai M."/>
            <person name="Richardson P."/>
        </authorList>
    </citation>
    <scope>NUCLEOTIDE SEQUENCE [LARGE SCALE GENOMIC DNA]</scope>
    <source>
        <strain>DSM 11300 / CIP 105573 / AG-3a</strain>
    </source>
</reference>
<evidence type="ECO:0000255" key="1">
    <source>
        <dbReference type="HAMAP-Rule" id="MF_01358"/>
    </source>
</evidence>
<keyword id="KW-1003">Cell membrane</keyword>
<keyword id="KW-0472">Membrane</keyword>
<keyword id="KW-0520">NAD</keyword>
<keyword id="KW-0874">Quinone</keyword>
<keyword id="KW-1278">Translocase</keyword>
<keyword id="KW-0813">Transport</keyword>
<protein>
    <recommendedName>
        <fullName evidence="1">NADH-quinone oxidoreductase subunit D</fullName>
        <ecNumber evidence="1">7.1.1.-</ecNumber>
    </recommendedName>
    <alternativeName>
        <fullName evidence="1">NADH dehydrogenase I subunit D</fullName>
    </alternativeName>
    <alternativeName>
        <fullName evidence="1">NDH-1 subunit D</fullName>
    </alternativeName>
</protein>
<proteinExistence type="inferred from homology"/>
<name>NUOD_DEIGD</name>
<sequence length="403" mass="44878">MTTEPLTPPTSGALLHTEIMSLNVGPQHPSTHGVLRLVVDMDGEYVTRVTPHMGYLHTGFEKTFEHRTYHQGVTYAPRTDYLHCFGHELAYVLSVEKLLGAEVPERATTVRVMLHELGRIHSHLVFVGTGLLDLGALTPFFYAFREKEAVQDLFEAVCGYRMNQGYFRVGGLARDIPEDWPARVAAFLDTFERGVDEYETLFAKNPIFLDRAKGVGVIPRDVAIDLGLTGPNLRASGVPLDHRKANPYCGYETYDFEVPVSQAGDSLARFQLRLLELRESAKIIRQALKRLTPGPIKDPNRKISLPPRSELETSMEAVIHHFKLVTEGFHPPKGEVYVPTESARGEVGYYIVSDGGSMPYRVKIRAPSFVNLQALEYACVGGQFADLITILASIDPVLGDVDR</sequence>
<accession>Q1IZX0</accession>
<gene>
    <name evidence="1" type="primary">nuoD</name>
    <name type="ordered locus">Dgeo_0912</name>
</gene>
<organism>
    <name type="scientific">Deinococcus geothermalis (strain DSM 11300 / CIP 105573 / AG-3a)</name>
    <dbReference type="NCBI Taxonomy" id="319795"/>
    <lineage>
        <taxon>Bacteria</taxon>
        <taxon>Thermotogati</taxon>
        <taxon>Deinococcota</taxon>
        <taxon>Deinococci</taxon>
        <taxon>Deinococcales</taxon>
        <taxon>Deinococcaceae</taxon>
        <taxon>Deinococcus</taxon>
    </lineage>
</organism>
<comment type="function">
    <text evidence="1">NDH-1 shuttles electrons from NADH, via FMN and iron-sulfur (Fe-S) centers, to quinones in the respiratory chain. The immediate electron acceptor for the enzyme in this species is believed to be a menaquinone. Couples the redox reaction to proton translocation (for every two electrons transferred, four hydrogen ions are translocated across the cytoplasmic membrane), and thus conserves the redox energy in a proton gradient.</text>
</comment>
<comment type="catalytic activity">
    <reaction evidence="1">
        <text>a quinone + NADH + 5 H(+)(in) = a quinol + NAD(+) + 4 H(+)(out)</text>
        <dbReference type="Rhea" id="RHEA:57888"/>
        <dbReference type="ChEBI" id="CHEBI:15378"/>
        <dbReference type="ChEBI" id="CHEBI:24646"/>
        <dbReference type="ChEBI" id="CHEBI:57540"/>
        <dbReference type="ChEBI" id="CHEBI:57945"/>
        <dbReference type="ChEBI" id="CHEBI:132124"/>
    </reaction>
</comment>
<comment type="subunit">
    <text evidence="1">NDH-1 is composed of 15 different subunits. Subunits NuoB, C, D, E, F, and G constitute the peripheral sector of the complex.</text>
</comment>
<comment type="subcellular location">
    <subcellularLocation>
        <location evidence="1">Cell membrane</location>
        <topology evidence="1">Peripheral membrane protein</topology>
        <orientation evidence="1">Cytoplasmic side</orientation>
    </subcellularLocation>
</comment>
<comment type="similarity">
    <text evidence="1">Belongs to the complex I 49 kDa subunit family.</text>
</comment>
<feature type="chain" id="PRO_0000357804" description="NADH-quinone oxidoreductase subunit D">
    <location>
        <begin position="1"/>
        <end position="403"/>
    </location>
</feature>